<protein>
    <recommendedName>
        <fullName>Flagellar biosynthesis protein FlhA</fullName>
    </recommendedName>
</protein>
<accession>Q8K9S0</accession>
<feature type="chain" id="PRO_0000190013" description="Flagellar biosynthesis protein FlhA">
    <location>
        <begin position="1"/>
        <end position="695"/>
    </location>
</feature>
<feature type="transmembrane region" description="Helical" evidence="2">
    <location>
        <begin position="23"/>
        <end position="43"/>
    </location>
</feature>
<feature type="transmembrane region" description="Helical" evidence="2">
    <location>
        <begin position="44"/>
        <end position="64"/>
    </location>
</feature>
<feature type="transmembrane region" description="Helical" evidence="2">
    <location>
        <begin position="71"/>
        <end position="91"/>
    </location>
</feature>
<feature type="transmembrane region" description="Helical" evidence="2">
    <location>
        <begin position="121"/>
        <end position="141"/>
    </location>
</feature>
<feature type="transmembrane region" description="Helical" evidence="2">
    <location>
        <begin position="209"/>
        <end position="229"/>
    </location>
</feature>
<feature type="transmembrane region" description="Helical" evidence="2">
    <location>
        <begin position="247"/>
        <end position="267"/>
    </location>
</feature>
<feature type="transmembrane region" description="Helical" evidence="2">
    <location>
        <begin position="285"/>
        <end position="307"/>
    </location>
</feature>
<feature type="transmembrane region" description="Helical" evidence="2">
    <location>
        <begin position="311"/>
        <end position="328"/>
    </location>
</feature>
<gene>
    <name type="primary">flhA</name>
    <name type="ordered locus">BUsg_236</name>
</gene>
<proteinExistence type="inferred from homology"/>
<evidence type="ECO:0000250" key="1"/>
<evidence type="ECO:0000255" key="2"/>
<evidence type="ECO:0000305" key="3"/>
<keyword id="KW-1005">Bacterial flagellum biogenesis</keyword>
<keyword id="KW-1006">Bacterial flagellum protein export</keyword>
<keyword id="KW-1003">Cell membrane</keyword>
<keyword id="KW-0472">Membrane</keyword>
<keyword id="KW-0653">Protein transport</keyword>
<keyword id="KW-0812">Transmembrane</keyword>
<keyword id="KW-1133">Transmembrane helix</keyword>
<keyword id="KW-0813">Transport</keyword>
<comment type="function">
    <text evidence="1">Required for formation of the rod structure of the flagellar apparatus. Together with FliI and FliH, may constitute the export apparatus of flagellin (By similarity).</text>
</comment>
<comment type="subcellular location">
    <subcellularLocation>
        <location evidence="1">Cell membrane</location>
        <topology evidence="1">Multi-pass membrane protein</topology>
    </subcellularLocation>
</comment>
<comment type="similarity">
    <text evidence="3">Belongs to the FHIPEP (flagella/HR/invasion proteins export pore) family.</text>
</comment>
<comment type="sequence caution" evidence="3">
    <conflict type="erroneous initiation">
        <sequence resource="EMBL-CDS" id="AAM67795"/>
    </conflict>
</comment>
<name>FLHA_BUCAP</name>
<organism>
    <name type="scientific">Buchnera aphidicola subsp. Schizaphis graminum (strain Sg)</name>
    <dbReference type="NCBI Taxonomy" id="198804"/>
    <lineage>
        <taxon>Bacteria</taxon>
        <taxon>Pseudomonadati</taxon>
        <taxon>Pseudomonadota</taxon>
        <taxon>Gammaproteobacteria</taxon>
        <taxon>Enterobacterales</taxon>
        <taxon>Erwiniaceae</taxon>
        <taxon>Buchnera</taxon>
    </lineage>
</organism>
<dbReference type="EMBL" id="AE013218">
    <property type="protein sequence ID" value="AAM67795.1"/>
    <property type="status" value="ALT_INIT"/>
    <property type="molecule type" value="Genomic_DNA"/>
</dbReference>
<dbReference type="RefSeq" id="WP_011053762.1">
    <property type="nucleotide sequence ID" value="NC_004061.1"/>
</dbReference>
<dbReference type="SMR" id="Q8K9S0"/>
<dbReference type="STRING" id="198804.BUsg_236"/>
<dbReference type="GeneID" id="93003702"/>
<dbReference type="KEGG" id="bas:BUsg_236"/>
<dbReference type="eggNOG" id="COG1298">
    <property type="taxonomic scope" value="Bacteria"/>
</dbReference>
<dbReference type="HOGENOM" id="CLU_015346_3_0_6"/>
<dbReference type="Proteomes" id="UP000000416">
    <property type="component" value="Chromosome"/>
</dbReference>
<dbReference type="GO" id="GO:0005886">
    <property type="term" value="C:plasma membrane"/>
    <property type="evidence" value="ECO:0007669"/>
    <property type="project" value="UniProtKB-SubCell"/>
</dbReference>
<dbReference type="GO" id="GO:0044780">
    <property type="term" value="P:bacterial-type flagellum assembly"/>
    <property type="evidence" value="ECO:0007669"/>
    <property type="project" value="InterPro"/>
</dbReference>
<dbReference type="GO" id="GO:0009306">
    <property type="term" value="P:protein secretion"/>
    <property type="evidence" value="ECO:0007669"/>
    <property type="project" value="InterPro"/>
</dbReference>
<dbReference type="Gene3D" id="3.40.30.60">
    <property type="entry name" value="FHIPEP family, domain 1"/>
    <property type="match status" value="1"/>
</dbReference>
<dbReference type="Gene3D" id="1.10.8.540">
    <property type="entry name" value="FHIPEP family, domain 3"/>
    <property type="match status" value="1"/>
</dbReference>
<dbReference type="Gene3D" id="3.40.50.12790">
    <property type="entry name" value="FHIPEP family, domain 4"/>
    <property type="match status" value="1"/>
</dbReference>
<dbReference type="InterPro" id="IPR042194">
    <property type="entry name" value="FHIPEP_1"/>
</dbReference>
<dbReference type="InterPro" id="IPR042193">
    <property type="entry name" value="FHIPEP_3"/>
</dbReference>
<dbReference type="InterPro" id="IPR042196">
    <property type="entry name" value="FHIPEP_4"/>
</dbReference>
<dbReference type="InterPro" id="IPR025505">
    <property type="entry name" value="FHIPEP_CS"/>
</dbReference>
<dbReference type="InterPro" id="IPR006301">
    <property type="entry name" value="FlhA"/>
</dbReference>
<dbReference type="InterPro" id="IPR001712">
    <property type="entry name" value="T3SS_FHIPEP"/>
</dbReference>
<dbReference type="NCBIfam" id="TIGR01398">
    <property type="entry name" value="FlhA"/>
    <property type="match status" value="1"/>
</dbReference>
<dbReference type="PANTHER" id="PTHR30161:SF1">
    <property type="entry name" value="FLAGELLAR BIOSYNTHESIS PROTEIN FLHA-RELATED"/>
    <property type="match status" value="1"/>
</dbReference>
<dbReference type="PANTHER" id="PTHR30161">
    <property type="entry name" value="FLAGELLAR EXPORT PROTEIN, MEMBRANE FLHA SUBUNIT-RELATED"/>
    <property type="match status" value="1"/>
</dbReference>
<dbReference type="Pfam" id="PF00771">
    <property type="entry name" value="FHIPEP"/>
    <property type="match status" value="1"/>
</dbReference>
<dbReference type="PIRSF" id="PIRSF005419">
    <property type="entry name" value="FlhA"/>
    <property type="match status" value="1"/>
</dbReference>
<dbReference type="PRINTS" id="PR00949">
    <property type="entry name" value="TYPE3IMAPROT"/>
</dbReference>
<dbReference type="PROSITE" id="PS00994">
    <property type="entry name" value="FHIPEP"/>
    <property type="match status" value="1"/>
</dbReference>
<reference key="1">
    <citation type="journal article" date="2002" name="Science">
        <title>50 million years of genomic stasis in endosymbiotic bacteria.</title>
        <authorList>
            <person name="Tamas I."/>
            <person name="Klasson L."/>
            <person name="Canbaeck B."/>
            <person name="Naeslund A.K."/>
            <person name="Eriksson A.-S."/>
            <person name="Wernegreen J.J."/>
            <person name="Sandstroem J.P."/>
            <person name="Moran N.A."/>
            <person name="Andersson S.G.E."/>
        </authorList>
    </citation>
    <scope>NUCLEOTIDE SEQUENCE [LARGE SCALE GENOMIC DNA]</scope>
    <source>
        <strain>Sg</strain>
    </source>
</reference>
<sequence length="695" mass="77922">MINFSSFFRIIQNLKKTQWQTLIGPVLILIILSMMVLPLAPFVLDVFFTFNIALSIIILLVSMFTRHTLDFAAFPTILLFSTLLRLALNVASTRVIFLNGHNGTHSAGRVIESFGHFLVGGNFAIGIVVFVILVIINFMVITKGSGRIAEVGARFILDAMPGKQMAIDADLNAGLIGEEEAKKRRLKITKEADFYGSMDGASKFVRGDAIAGILIMVLNIFGGLIIGFFQHNMLLGKAAEVYTLLTIGDGLVAQIPALVISTAAGVIVTRVSTNQNVGEQMISQLFCNSQVILLSAIVLGILGLVPGMPNIIFLVFTVSLLSLSWWLSRKKNNIKKNVLISDSKYKSRENSISEASWNDVELEDPIRIEIGYNLIPMVDIQKKGDLLDKIRIIRKKFAQEIGFLPPLVHIKNNINLKRTSYQIFIKGVEVGQGTCFYGKYMAIRSGRETEPLPFKEVYEPTFGLSGYWIDLNFKNKAEKKGYSVVEASAIIATHLNFLISKHIDELFGRQEAQQLLDHVNLEMPKLTEDLIPNIINLTILHKILKNLLLEEVPIRDMRTILETLSEFSIDQKDPNELTSLVRIALSKIITQKLFYKKDIIEIIGLEKNLEQLLLDNLKGQNNTIEPSLFELLMIKTQEAIEKQKLINAPIVLLVTHPLRFFLSKILRKKFPELTVLSQFEVTDIKKVKMTSIIGS</sequence>